<proteinExistence type="inferred from homology"/>
<protein>
    <recommendedName>
        <fullName evidence="2">Ribosome-binding factor A</fullName>
    </recommendedName>
</protein>
<dbReference type="EMBL" id="AE005674">
    <property type="protein sequence ID" value="AAN44675.2"/>
    <property type="molecule type" value="Genomic_DNA"/>
</dbReference>
<dbReference type="EMBL" id="AE014073">
    <property type="protein sequence ID" value="AAP18489.1"/>
    <property type="molecule type" value="Genomic_DNA"/>
</dbReference>
<dbReference type="RefSeq" id="NP_708968.2">
    <property type="nucleotide sequence ID" value="NC_004337.2"/>
</dbReference>
<dbReference type="RefSeq" id="WP_001040205.1">
    <property type="nucleotide sequence ID" value="NZ_WPGW01000004.1"/>
</dbReference>
<dbReference type="SMR" id="P0A7G5"/>
<dbReference type="STRING" id="198214.SF3208"/>
<dbReference type="PaxDb" id="198214-SF3208"/>
<dbReference type="GeneID" id="1027155"/>
<dbReference type="GeneID" id="93778816"/>
<dbReference type="KEGG" id="sfl:SF3208"/>
<dbReference type="KEGG" id="sfx:S3425"/>
<dbReference type="PATRIC" id="fig|198214.7.peg.3808"/>
<dbReference type="HOGENOM" id="CLU_089475_5_0_6"/>
<dbReference type="Proteomes" id="UP000001006">
    <property type="component" value="Chromosome"/>
</dbReference>
<dbReference type="Proteomes" id="UP000002673">
    <property type="component" value="Chromosome"/>
</dbReference>
<dbReference type="GO" id="GO:0005829">
    <property type="term" value="C:cytosol"/>
    <property type="evidence" value="ECO:0007669"/>
    <property type="project" value="TreeGrafter"/>
</dbReference>
<dbReference type="GO" id="GO:0043024">
    <property type="term" value="F:ribosomal small subunit binding"/>
    <property type="evidence" value="ECO:0007669"/>
    <property type="project" value="TreeGrafter"/>
</dbReference>
<dbReference type="GO" id="GO:0030490">
    <property type="term" value="P:maturation of SSU-rRNA"/>
    <property type="evidence" value="ECO:0007669"/>
    <property type="project" value="UniProtKB-UniRule"/>
</dbReference>
<dbReference type="FunFam" id="3.30.300.20:FF:000007">
    <property type="entry name" value="Ribosome-binding factor A"/>
    <property type="match status" value="1"/>
</dbReference>
<dbReference type="Gene3D" id="3.30.300.20">
    <property type="match status" value="1"/>
</dbReference>
<dbReference type="HAMAP" id="MF_00003">
    <property type="entry name" value="RbfA"/>
    <property type="match status" value="1"/>
</dbReference>
<dbReference type="InterPro" id="IPR015946">
    <property type="entry name" value="KH_dom-like_a/b"/>
</dbReference>
<dbReference type="InterPro" id="IPR000238">
    <property type="entry name" value="RbfA"/>
</dbReference>
<dbReference type="InterPro" id="IPR023799">
    <property type="entry name" value="RbfA_dom_sf"/>
</dbReference>
<dbReference type="InterPro" id="IPR020053">
    <property type="entry name" value="Ribosome-bd_factorA_CS"/>
</dbReference>
<dbReference type="NCBIfam" id="TIGR00082">
    <property type="entry name" value="rbfA"/>
    <property type="match status" value="1"/>
</dbReference>
<dbReference type="PANTHER" id="PTHR33515">
    <property type="entry name" value="RIBOSOME-BINDING FACTOR A, CHLOROPLASTIC-RELATED"/>
    <property type="match status" value="1"/>
</dbReference>
<dbReference type="PANTHER" id="PTHR33515:SF1">
    <property type="entry name" value="RIBOSOME-BINDING FACTOR A, CHLOROPLASTIC-RELATED"/>
    <property type="match status" value="1"/>
</dbReference>
<dbReference type="Pfam" id="PF02033">
    <property type="entry name" value="RBFA"/>
    <property type="match status" value="1"/>
</dbReference>
<dbReference type="SUPFAM" id="SSF89919">
    <property type="entry name" value="Ribosome-binding factor A, RbfA"/>
    <property type="match status" value="1"/>
</dbReference>
<dbReference type="PROSITE" id="PS01319">
    <property type="entry name" value="RBFA"/>
    <property type="match status" value="1"/>
</dbReference>
<keyword id="KW-0963">Cytoplasm</keyword>
<keyword id="KW-1185">Reference proteome</keyword>
<keyword id="KW-0690">Ribosome biogenesis</keyword>
<sequence length="133" mass="15154">MAKEFGRPQRVAQEMQKEIALILQREIKDPRLGMMTTVSGVEMSRDLAYAKVYVTFLNDKDEDAVKAGIKALQEASGFIRSLLGKAMRLRIVPELTFFYDNSLVEGMRMSNLVTSVVKHDEERRVNPDDSKED</sequence>
<organism>
    <name type="scientific">Shigella flexneri</name>
    <dbReference type="NCBI Taxonomy" id="623"/>
    <lineage>
        <taxon>Bacteria</taxon>
        <taxon>Pseudomonadati</taxon>
        <taxon>Pseudomonadota</taxon>
        <taxon>Gammaproteobacteria</taxon>
        <taxon>Enterobacterales</taxon>
        <taxon>Enterobacteriaceae</taxon>
        <taxon>Shigella</taxon>
    </lineage>
</organism>
<name>RBFA_SHIFL</name>
<evidence type="ECO:0000250" key="1"/>
<evidence type="ECO:0000255" key="2">
    <source>
        <dbReference type="HAMAP-Rule" id="MF_00003"/>
    </source>
</evidence>
<feature type="initiator methionine" description="Removed" evidence="1">
    <location>
        <position position="1"/>
    </location>
</feature>
<feature type="chain" id="PRO_0000102728" description="Ribosome-binding factor A">
    <location>
        <begin position="2"/>
        <end position="133"/>
    </location>
</feature>
<accession>P0A7G5</accession>
<accession>P09170</accession>
<reference key="1">
    <citation type="journal article" date="2002" name="Nucleic Acids Res.">
        <title>Genome sequence of Shigella flexneri 2a: insights into pathogenicity through comparison with genomes of Escherichia coli K12 and O157.</title>
        <authorList>
            <person name="Jin Q."/>
            <person name="Yuan Z."/>
            <person name="Xu J."/>
            <person name="Wang Y."/>
            <person name="Shen Y."/>
            <person name="Lu W."/>
            <person name="Wang J."/>
            <person name="Liu H."/>
            <person name="Yang J."/>
            <person name="Yang F."/>
            <person name="Zhang X."/>
            <person name="Zhang J."/>
            <person name="Yang G."/>
            <person name="Wu H."/>
            <person name="Qu D."/>
            <person name="Dong J."/>
            <person name="Sun L."/>
            <person name="Xue Y."/>
            <person name="Zhao A."/>
            <person name="Gao Y."/>
            <person name="Zhu J."/>
            <person name="Kan B."/>
            <person name="Ding K."/>
            <person name="Chen S."/>
            <person name="Cheng H."/>
            <person name="Yao Z."/>
            <person name="He B."/>
            <person name="Chen R."/>
            <person name="Ma D."/>
            <person name="Qiang B."/>
            <person name="Wen Y."/>
            <person name="Hou Y."/>
            <person name="Yu J."/>
        </authorList>
    </citation>
    <scope>NUCLEOTIDE SEQUENCE [LARGE SCALE GENOMIC DNA]</scope>
    <source>
        <strain>301 / Serotype 2a</strain>
    </source>
</reference>
<reference key="2">
    <citation type="journal article" date="2003" name="Infect. Immun.">
        <title>Complete genome sequence and comparative genomics of Shigella flexneri serotype 2a strain 2457T.</title>
        <authorList>
            <person name="Wei J."/>
            <person name="Goldberg M.B."/>
            <person name="Burland V."/>
            <person name="Venkatesan M.M."/>
            <person name="Deng W."/>
            <person name="Fournier G."/>
            <person name="Mayhew G.F."/>
            <person name="Plunkett G. III"/>
            <person name="Rose D.J."/>
            <person name="Darling A."/>
            <person name="Mau B."/>
            <person name="Perna N.T."/>
            <person name="Payne S.M."/>
            <person name="Runyen-Janecky L.J."/>
            <person name="Zhou S."/>
            <person name="Schwartz D.C."/>
            <person name="Blattner F.R."/>
        </authorList>
    </citation>
    <scope>NUCLEOTIDE SEQUENCE [LARGE SCALE GENOMIC DNA]</scope>
    <source>
        <strain>ATCC 700930 / 2457T / Serotype 2a</strain>
    </source>
</reference>
<gene>
    <name evidence="2" type="primary">rbfA</name>
    <name type="ordered locus">SF3208</name>
    <name type="ordered locus">S3425</name>
</gene>
<comment type="function">
    <text evidence="2">One of several proteins that assist in the late maturation steps of the functional core of the 30S ribosomal subunit. Associates with free 30S ribosomal subunits (but not with 30S subunits that are part of 70S ribosomes or polysomes). Required for efficient processing of 16S rRNA. May interact with the 5'-terminal helix region of 16S rRNA.</text>
</comment>
<comment type="subunit">
    <text evidence="2">Monomer. Binds 30S ribosomal subunits, but not 50S ribosomal subunits or 70S ribosomes.</text>
</comment>
<comment type="subcellular location">
    <subcellularLocation>
        <location evidence="2">Cytoplasm</location>
    </subcellularLocation>
</comment>
<comment type="similarity">
    <text evidence="2">Belongs to the RbfA family.</text>
</comment>